<name>RS10_CLOAB</name>
<keyword id="KW-1185">Reference proteome</keyword>
<keyword id="KW-0687">Ribonucleoprotein</keyword>
<keyword id="KW-0689">Ribosomal protein</keyword>
<sequence length="102" mass="11481">MAKQKIRIRLKAFDHTILDQSAEKIVETAKTTGAKVAGPVPLPTEKDVVTILRSPHKYKDSREQFEIRTHKRLIDIISPSPKTVDALMRLDLPAGVDIEIKL</sequence>
<dbReference type="EMBL" id="AE001437">
    <property type="protein sequence ID" value="AAK81073.1"/>
    <property type="molecule type" value="Genomic_DNA"/>
</dbReference>
<dbReference type="PIR" id="F97285">
    <property type="entry name" value="F97285"/>
</dbReference>
<dbReference type="RefSeq" id="NP_349733.1">
    <property type="nucleotide sequence ID" value="NC_003030.1"/>
</dbReference>
<dbReference type="RefSeq" id="WP_010966413.1">
    <property type="nucleotide sequence ID" value="NC_003030.1"/>
</dbReference>
<dbReference type="SMR" id="Q97EH7"/>
<dbReference type="STRING" id="272562.CA_C3134"/>
<dbReference type="GeneID" id="44999621"/>
<dbReference type="KEGG" id="cac:CA_C3134"/>
<dbReference type="PATRIC" id="fig|272562.8.peg.3317"/>
<dbReference type="eggNOG" id="COG0051">
    <property type="taxonomic scope" value="Bacteria"/>
</dbReference>
<dbReference type="HOGENOM" id="CLU_122625_1_3_9"/>
<dbReference type="OrthoDB" id="9804464at2"/>
<dbReference type="Proteomes" id="UP000000814">
    <property type="component" value="Chromosome"/>
</dbReference>
<dbReference type="GO" id="GO:1990904">
    <property type="term" value="C:ribonucleoprotein complex"/>
    <property type="evidence" value="ECO:0007669"/>
    <property type="project" value="UniProtKB-KW"/>
</dbReference>
<dbReference type="GO" id="GO:0005840">
    <property type="term" value="C:ribosome"/>
    <property type="evidence" value="ECO:0007669"/>
    <property type="project" value="UniProtKB-KW"/>
</dbReference>
<dbReference type="GO" id="GO:0003735">
    <property type="term" value="F:structural constituent of ribosome"/>
    <property type="evidence" value="ECO:0007669"/>
    <property type="project" value="InterPro"/>
</dbReference>
<dbReference type="GO" id="GO:0000049">
    <property type="term" value="F:tRNA binding"/>
    <property type="evidence" value="ECO:0007669"/>
    <property type="project" value="UniProtKB-UniRule"/>
</dbReference>
<dbReference type="GO" id="GO:0006412">
    <property type="term" value="P:translation"/>
    <property type="evidence" value="ECO:0007669"/>
    <property type="project" value="UniProtKB-UniRule"/>
</dbReference>
<dbReference type="FunFam" id="3.30.70.600:FF:000001">
    <property type="entry name" value="30S ribosomal protein S10"/>
    <property type="match status" value="1"/>
</dbReference>
<dbReference type="Gene3D" id="3.30.70.600">
    <property type="entry name" value="Ribosomal protein S10 domain"/>
    <property type="match status" value="1"/>
</dbReference>
<dbReference type="HAMAP" id="MF_00508">
    <property type="entry name" value="Ribosomal_uS10"/>
    <property type="match status" value="1"/>
</dbReference>
<dbReference type="InterPro" id="IPR001848">
    <property type="entry name" value="Ribosomal_uS10"/>
</dbReference>
<dbReference type="InterPro" id="IPR018268">
    <property type="entry name" value="Ribosomal_uS10_CS"/>
</dbReference>
<dbReference type="InterPro" id="IPR027486">
    <property type="entry name" value="Ribosomal_uS10_dom"/>
</dbReference>
<dbReference type="InterPro" id="IPR036838">
    <property type="entry name" value="Ribosomal_uS10_dom_sf"/>
</dbReference>
<dbReference type="NCBIfam" id="NF001861">
    <property type="entry name" value="PRK00596.1"/>
    <property type="match status" value="1"/>
</dbReference>
<dbReference type="NCBIfam" id="TIGR01049">
    <property type="entry name" value="rpsJ_bact"/>
    <property type="match status" value="1"/>
</dbReference>
<dbReference type="PANTHER" id="PTHR11700">
    <property type="entry name" value="30S RIBOSOMAL PROTEIN S10 FAMILY MEMBER"/>
    <property type="match status" value="1"/>
</dbReference>
<dbReference type="Pfam" id="PF00338">
    <property type="entry name" value="Ribosomal_S10"/>
    <property type="match status" value="1"/>
</dbReference>
<dbReference type="PRINTS" id="PR00971">
    <property type="entry name" value="RIBOSOMALS10"/>
</dbReference>
<dbReference type="SMART" id="SM01403">
    <property type="entry name" value="Ribosomal_S10"/>
    <property type="match status" value="1"/>
</dbReference>
<dbReference type="SUPFAM" id="SSF54999">
    <property type="entry name" value="Ribosomal protein S10"/>
    <property type="match status" value="1"/>
</dbReference>
<dbReference type="PROSITE" id="PS00361">
    <property type="entry name" value="RIBOSOMAL_S10"/>
    <property type="match status" value="1"/>
</dbReference>
<organism>
    <name type="scientific">Clostridium acetobutylicum (strain ATCC 824 / DSM 792 / JCM 1419 / IAM 19013 / LMG 5710 / NBRC 13948 / NRRL B-527 / VKM B-1787 / 2291 / W)</name>
    <dbReference type="NCBI Taxonomy" id="272562"/>
    <lineage>
        <taxon>Bacteria</taxon>
        <taxon>Bacillati</taxon>
        <taxon>Bacillota</taxon>
        <taxon>Clostridia</taxon>
        <taxon>Eubacteriales</taxon>
        <taxon>Clostridiaceae</taxon>
        <taxon>Clostridium</taxon>
    </lineage>
</organism>
<comment type="function">
    <text evidence="1">Involved in the binding of tRNA to the ribosomes.</text>
</comment>
<comment type="subunit">
    <text evidence="1">Part of the 30S ribosomal subunit.</text>
</comment>
<comment type="similarity">
    <text evidence="1">Belongs to the universal ribosomal protein uS10 family.</text>
</comment>
<proteinExistence type="inferred from homology"/>
<protein>
    <recommendedName>
        <fullName evidence="1">Small ribosomal subunit protein uS10</fullName>
    </recommendedName>
    <alternativeName>
        <fullName evidence="2">30S ribosomal protein S10</fullName>
    </alternativeName>
</protein>
<evidence type="ECO:0000255" key="1">
    <source>
        <dbReference type="HAMAP-Rule" id="MF_00508"/>
    </source>
</evidence>
<evidence type="ECO:0000305" key="2"/>
<gene>
    <name evidence="1" type="primary">rpsJ</name>
    <name type="ordered locus">CA_C3134</name>
</gene>
<accession>Q97EH7</accession>
<reference key="1">
    <citation type="journal article" date="2001" name="J. Bacteriol.">
        <title>Genome sequence and comparative analysis of the solvent-producing bacterium Clostridium acetobutylicum.</title>
        <authorList>
            <person name="Noelling J."/>
            <person name="Breton G."/>
            <person name="Omelchenko M.V."/>
            <person name="Makarova K.S."/>
            <person name="Zeng Q."/>
            <person name="Gibson R."/>
            <person name="Lee H.M."/>
            <person name="Dubois J."/>
            <person name="Qiu D."/>
            <person name="Hitti J."/>
            <person name="Wolf Y.I."/>
            <person name="Tatusov R.L."/>
            <person name="Sabathe F."/>
            <person name="Doucette-Stamm L.A."/>
            <person name="Soucaille P."/>
            <person name="Daly M.J."/>
            <person name="Bennett G.N."/>
            <person name="Koonin E.V."/>
            <person name="Smith D.R."/>
        </authorList>
    </citation>
    <scope>NUCLEOTIDE SEQUENCE [LARGE SCALE GENOMIC DNA]</scope>
    <source>
        <strain>ATCC 824 / DSM 792 / JCM 1419 / IAM 19013 / LMG 5710 / NBRC 13948 / NRRL B-527 / VKM B-1787 / 2291 / W</strain>
    </source>
</reference>
<feature type="chain" id="PRO_0000146521" description="Small ribosomal subunit protein uS10">
    <location>
        <begin position="1"/>
        <end position="102"/>
    </location>
</feature>